<dbReference type="EC" id="2.4.2.21" evidence="1"/>
<dbReference type="EMBL" id="CP001144">
    <property type="protein sequence ID" value="ACH77299.1"/>
    <property type="molecule type" value="Genomic_DNA"/>
</dbReference>
<dbReference type="RefSeq" id="WP_001193983.1">
    <property type="nucleotide sequence ID" value="NC_011205.1"/>
</dbReference>
<dbReference type="SMR" id="B5FLY4"/>
<dbReference type="KEGG" id="sed:SeD_A2351"/>
<dbReference type="HOGENOM" id="CLU_002982_0_0_6"/>
<dbReference type="UniPathway" id="UPA00061">
    <property type="reaction ID" value="UER00516"/>
</dbReference>
<dbReference type="Proteomes" id="UP000008322">
    <property type="component" value="Chromosome"/>
</dbReference>
<dbReference type="GO" id="GO:0008939">
    <property type="term" value="F:nicotinate-nucleotide-dimethylbenzimidazole phosphoribosyltransferase activity"/>
    <property type="evidence" value="ECO:0007669"/>
    <property type="project" value="UniProtKB-UniRule"/>
</dbReference>
<dbReference type="GO" id="GO:0009236">
    <property type="term" value="P:cobalamin biosynthetic process"/>
    <property type="evidence" value="ECO:0007669"/>
    <property type="project" value="UniProtKB-KW"/>
</dbReference>
<dbReference type="CDD" id="cd02439">
    <property type="entry name" value="DMB-PRT_CobT"/>
    <property type="match status" value="1"/>
</dbReference>
<dbReference type="FunFam" id="1.10.1610.10:FF:000001">
    <property type="entry name" value="Nicotinate-nucleotide--dimethylbenzimidazole phosphoribosyltransferase"/>
    <property type="match status" value="1"/>
</dbReference>
<dbReference type="FunFam" id="3.40.50.10210:FF:000001">
    <property type="entry name" value="Nicotinate-nucleotide--dimethylbenzimidazole phosphoribosyltransferase"/>
    <property type="match status" value="1"/>
</dbReference>
<dbReference type="Gene3D" id="1.10.1610.10">
    <property type="match status" value="1"/>
</dbReference>
<dbReference type="Gene3D" id="3.40.50.10210">
    <property type="match status" value="1"/>
</dbReference>
<dbReference type="HAMAP" id="MF_00230">
    <property type="entry name" value="CobT"/>
    <property type="match status" value="1"/>
</dbReference>
<dbReference type="InterPro" id="IPR003200">
    <property type="entry name" value="Nict_dMeBzImd_PRibTrfase"/>
</dbReference>
<dbReference type="InterPro" id="IPR017846">
    <property type="entry name" value="Nict_dMeBzImd_PRibTrfase_bact"/>
</dbReference>
<dbReference type="InterPro" id="IPR023195">
    <property type="entry name" value="Nict_dMeBzImd_PRibTrfase_N"/>
</dbReference>
<dbReference type="InterPro" id="IPR036087">
    <property type="entry name" value="Nict_dMeBzImd_PRibTrfase_sf"/>
</dbReference>
<dbReference type="NCBIfam" id="TIGR03160">
    <property type="entry name" value="cobT_DBIPRT"/>
    <property type="match status" value="1"/>
</dbReference>
<dbReference type="NCBIfam" id="NF000996">
    <property type="entry name" value="PRK00105.1"/>
    <property type="match status" value="1"/>
</dbReference>
<dbReference type="PANTHER" id="PTHR43463">
    <property type="entry name" value="NICOTINATE-NUCLEOTIDE--DIMETHYLBENZIMIDAZOLE PHOSPHORIBOSYLTRANSFERASE"/>
    <property type="match status" value="1"/>
</dbReference>
<dbReference type="PANTHER" id="PTHR43463:SF1">
    <property type="entry name" value="NICOTINATE-NUCLEOTIDE--DIMETHYLBENZIMIDAZOLE PHOSPHORIBOSYLTRANSFERASE"/>
    <property type="match status" value="1"/>
</dbReference>
<dbReference type="Pfam" id="PF02277">
    <property type="entry name" value="DBI_PRT"/>
    <property type="match status" value="1"/>
</dbReference>
<dbReference type="SUPFAM" id="SSF52733">
    <property type="entry name" value="Nicotinate mononucleotide:5,6-dimethylbenzimidazole phosphoribosyltransferase (CobT)"/>
    <property type="match status" value="1"/>
</dbReference>
<sequence>MQTLHALLRDIPAPDAEAMARAQQHIDGLLKPPGSLGRLETLAVQLAGMPGLNGTPQVGEKAVLVMCADHGVWDEGVAVSPKIVTAIQAANMTRGTTGVCVLAAQAGAKVHVIDVGIDAEPIPGVVNMRVARGCGNIAVGPAMSRLQAEALLLEVSRYTCDLAQRGVTLFGVGELGMANTTPAAAMVSVFTGSDAKEVVGIGANLPPSRIDNKVDVVRRAIAINQPNPRDGIDVLSKVGGFDLVGMTGVMLGAARCGLPVLLDGFLSYSAALAACQIAPAVRPYLIPSHFSAEKGARIALAHLSMEPYLHMAMRLGEGSGAALAMPIVEAACAMFHNMGELAASNIVLPEGNANAT</sequence>
<name>COBT_SALDC</name>
<evidence type="ECO:0000255" key="1">
    <source>
        <dbReference type="HAMAP-Rule" id="MF_00230"/>
    </source>
</evidence>
<organism>
    <name type="scientific">Salmonella dublin (strain CT_02021853)</name>
    <dbReference type="NCBI Taxonomy" id="439851"/>
    <lineage>
        <taxon>Bacteria</taxon>
        <taxon>Pseudomonadati</taxon>
        <taxon>Pseudomonadota</taxon>
        <taxon>Gammaproteobacteria</taxon>
        <taxon>Enterobacterales</taxon>
        <taxon>Enterobacteriaceae</taxon>
        <taxon>Salmonella</taxon>
    </lineage>
</organism>
<accession>B5FLY4</accession>
<reference key="1">
    <citation type="journal article" date="2011" name="J. Bacteriol.">
        <title>Comparative genomics of 28 Salmonella enterica isolates: evidence for CRISPR-mediated adaptive sublineage evolution.</title>
        <authorList>
            <person name="Fricke W.F."/>
            <person name="Mammel M.K."/>
            <person name="McDermott P.F."/>
            <person name="Tartera C."/>
            <person name="White D.G."/>
            <person name="Leclerc J.E."/>
            <person name="Ravel J."/>
            <person name="Cebula T.A."/>
        </authorList>
    </citation>
    <scope>NUCLEOTIDE SEQUENCE [LARGE SCALE GENOMIC DNA]</scope>
    <source>
        <strain>CT_02021853</strain>
    </source>
</reference>
<gene>
    <name evidence="1" type="primary">cobT</name>
    <name type="ordered locus">SeD_A2351</name>
</gene>
<keyword id="KW-0169">Cobalamin biosynthesis</keyword>
<keyword id="KW-0328">Glycosyltransferase</keyword>
<keyword id="KW-0808">Transferase</keyword>
<comment type="function">
    <text evidence="1">Catalyzes the synthesis of alpha-ribazole-5'-phosphate from nicotinate mononucleotide (NAMN) and 5,6-dimethylbenzimidazole (DMB).</text>
</comment>
<comment type="catalytic activity">
    <reaction evidence="1">
        <text>5,6-dimethylbenzimidazole + nicotinate beta-D-ribonucleotide = alpha-ribazole 5'-phosphate + nicotinate + H(+)</text>
        <dbReference type="Rhea" id="RHEA:11196"/>
        <dbReference type="ChEBI" id="CHEBI:15378"/>
        <dbReference type="ChEBI" id="CHEBI:15890"/>
        <dbReference type="ChEBI" id="CHEBI:32544"/>
        <dbReference type="ChEBI" id="CHEBI:57502"/>
        <dbReference type="ChEBI" id="CHEBI:57918"/>
        <dbReference type="EC" id="2.4.2.21"/>
    </reaction>
</comment>
<comment type="pathway">
    <text evidence="1">Nucleoside biosynthesis; alpha-ribazole biosynthesis; alpha-ribazole from 5,6-dimethylbenzimidazole: step 1/2.</text>
</comment>
<comment type="subunit">
    <text evidence="1">Homodimer.</text>
</comment>
<comment type="similarity">
    <text evidence="1">Belongs to the CobT family.</text>
</comment>
<proteinExistence type="inferred from homology"/>
<protein>
    <recommendedName>
        <fullName evidence="1">Nicotinate-nucleotide--dimethylbenzimidazole phosphoribosyltransferase</fullName>
        <shortName evidence="1">NN:DBI PRT</shortName>
        <ecNumber evidence="1">2.4.2.21</ecNumber>
    </recommendedName>
    <alternativeName>
        <fullName evidence="1">N(1)-alpha-phosphoribosyltransferase</fullName>
    </alternativeName>
</protein>
<feature type="chain" id="PRO_1000100474" description="Nicotinate-nucleotide--dimethylbenzimidazole phosphoribosyltransferase">
    <location>
        <begin position="1"/>
        <end position="356"/>
    </location>
</feature>
<feature type="active site" description="Proton acceptor" evidence="1">
    <location>
        <position position="317"/>
    </location>
</feature>